<name>ALLA_AZOVD</name>
<sequence>MRILSIEPLSKAAFAPFGEVIETEGSDYFMINGGSTRRYHALAEVQTSAPEDRAIVSIFVARALPMPLTIRMLERHPLGSQAFVPLRGNPFLIVVAPPGDAPRPEQVRVFLGNGRQGVNYQRGVWHHPVLALLDDDEFLVIDRSGAGPNCDEHFFGEDEQLLLHRP</sequence>
<dbReference type="EC" id="4.3.2.3" evidence="1"/>
<dbReference type="EMBL" id="CP001157">
    <property type="protein sequence ID" value="ACO78311.1"/>
    <property type="molecule type" value="Genomic_DNA"/>
</dbReference>
<dbReference type="RefSeq" id="WP_012700714.1">
    <property type="nucleotide sequence ID" value="NC_012560.1"/>
</dbReference>
<dbReference type="SMR" id="C1DFA8"/>
<dbReference type="STRING" id="322710.Avin_21100"/>
<dbReference type="EnsemblBacteria" id="ACO78311">
    <property type="protein sequence ID" value="ACO78311"/>
    <property type="gene ID" value="Avin_21100"/>
</dbReference>
<dbReference type="GeneID" id="88185328"/>
<dbReference type="KEGG" id="avn:Avin_21100"/>
<dbReference type="eggNOG" id="COG3194">
    <property type="taxonomic scope" value="Bacteria"/>
</dbReference>
<dbReference type="HOGENOM" id="CLU_070848_1_0_6"/>
<dbReference type="OrthoDB" id="9804602at2"/>
<dbReference type="UniPathway" id="UPA00395"/>
<dbReference type="Proteomes" id="UP000002424">
    <property type="component" value="Chromosome"/>
</dbReference>
<dbReference type="GO" id="GO:0004848">
    <property type="term" value="F:ureidoglycolate hydrolase activity"/>
    <property type="evidence" value="ECO:0007669"/>
    <property type="project" value="InterPro"/>
</dbReference>
<dbReference type="GO" id="GO:0050385">
    <property type="term" value="F:ureidoglycolate lyase activity"/>
    <property type="evidence" value="ECO:0007669"/>
    <property type="project" value="UniProtKB-UniRule"/>
</dbReference>
<dbReference type="GO" id="GO:0000256">
    <property type="term" value="P:allantoin catabolic process"/>
    <property type="evidence" value="ECO:0007669"/>
    <property type="project" value="UniProtKB-UniRule"/>
</dbReference>
<dbReference type="GO" id="GO:0006145">
    <property type="term" value="P:purine nucleobase catabolic process"/>
    <property type="evidence" value="ECO:0007669"/>
    <property type="project" value="UniProtKB-UniRule"/>
</dbReference>
<dbReference type="CDD" id="cd20298">
    <property type="entry name" value="cupin_UAH"/>
    <property type="match status" value="1"/>
</dbReference>
<dbReference type="Gene3D" id="2.60.120.480">
    <property type="entry name" value="Ureidoglycolate hydrolase"/>
    <property type="match status" value="1"/>
</dbReference>
<dbReference type="HAMAP" id="MF_00616">
    <property type="entry name" value="Ureidogly_lyase"/>
    <property type="match status" value="1"/>
</dbReference>
<dbReference type="InterPro" id="IPR011051">
    <property type="entry name" value="RmlC_Cupin_sf"/>
</dbReference>
<dbReference type="InterPro" id="IPR047233">
    <property type="entry name" value="UAH_cupin"/>
</dbReference>
<dbReference type="InterPro" id="IPR007247">
    <property type="entry name" value="Ureidogly_lyase"/>
</dbReference>
<dbReference type="InterPro" id="IPR023525">
    <property type="entry name" value="Ureidogly_lyase_bac"/>
</dbReference>
<dbReference type="InterPro" id="IPR024060">
    <property type="entry name" value="Ureidoglycolate_lyase_dom_sf"/>
</dbReference>
<dbReference type="NCBIfam" id="NF002949">
    <property type="entry name" value="PRK03606.1-2"/>
    <property type="match status" value="1"/>
</dbReference>
<dbReference type="NCBIfam" id="NF009932">
    <property type="entry name" value="PRK13395.1"/>
    <property type="match status" value="1"/>
</dbReference>
<dbReference type="PANTHER" id="PTHR21221">
    <property type="entry name" value="UREIDOGLYCOLATE HYDROLASE"/>
    <property type="match status" value="1"/>
</dbReference>
<dbReference type="PANTHER" id="PTHR21221:SF1">
    <property type="entry name" value="UREIDOGLYCOLATE LYASE"/>
    <property type="match status" value="1"/>
</dbReference>
<dbReference type="Pfam" id="PF04115">
    <property type="entry name" value="Ureidogly_lyase"/>
    <property type="match status" value="1"/>
</dbReference>
<dbReference type="PIRSF" id="PIRSF017306">
    <property type="entry name" value="Ureidogly_hydro"/>
    <property type="match status" value="1"/>
</dbReference>
<dbReference type="SUPFAM" id="SSF51182">
    <property type="entry name" value="RmlC-like cupins"/>
    <property type="match status" value="1"/>
</dbReference>
<comment type="function">
    <text evidence="1">Catalyzes the catabolism of the allantoin degradation intermediate (S)-ureidoglycolate, generating urea and glyoxylate. Involved in the utilization of allantoin as nitrogen source.</text>
</comment>
<comment type="catalytic activity">
    <reaction evidence="1">
        <text>(S)-ureidoglycolate = urea + glyoxylate</text>
        <dbReference type="Rhea" id="RHEA:11304"/>
        <dbReference type="ChEBI" id="CHEBI:16199"/>
        <dbReference type="ChEBI" id="CHEBI:36655"/>
        <dbReference type="ChEBI" id="CHEBI:57296"/>
        <dbReference type="EC" id="4.3.2.3"/>
    </reaction>
</comment>
<comment type="cofactor">
    <cofactor evidence="1">
        <name>Ni(2+)</name>
        <dbReference type="ChEBI" id="CHEBI:49786"/>
    </cofactor>
</comment>
<comment type="pathway">
    <text evidence="1">Nitrogen metabolism; (S)-allantoin degradation.</text>
</comment>
<comment type="subunit">
    <text evidence="1">Homodimer.</text>
</comment>
<comment type="similarity">
    <text evidence="1">Belongs to the ureidoglycolate lyase family.</text>
</comment>
<reference key="1">
    <citation type="journal article" date="2009" name="J. Bacteriol.">
        <title>Genome sequence of Azotobacter vinelandii, an obligate aerobe specialized to support diverse anaerobic metabolic processes.</title>
        <authorList>
            <person name="Setubal J.C."/>
            <person name="Dos Santos P."/>
            <person name="Goldman B.S."/>
            <person name="Ertesvaag H."/>
            <person name="Espin G."/>
            <person name="Rubio L.M."/>
            <person name="Valla S."/>
            <person name="Almeida N.F."/>
            <person name="Balasubramanian D."/>
            <person name="Cromes L."/>
            <person name="Curatti L."/>
            <person name="Du Z."/>
            <person name="Godsy E."/>
            <person name="Goodner B."/>
            <person name="Hellner-Burris K."/>
            <person name="Hernandez J.A."/>
            <person name="Houmiel K."/>
            <person name="Imperial J."/>
            <person name="Kennedy C."/>
            <person name="Larson T.J."/>
            <person name="Latreille P."/>
            <person name="Ligon L.S."/>
            <person name="Lu J."/>
            <person name="Maerk M."/>
            <person name="Miller N.M."/>
            <person name="Norton S."/>
            <person name="O'Carroll I.P."/>
            <person name="Paulsen I."/>
            <person name="Raulfs E.C."/>
            <person name="Roemer R."/>
            <person name="Rosser J."/>
            <person name="Segura D."/>
            <person name="Slater S."/>
            <person name="Stricklin S.L."/>
            <person name="Studholme D.J."/>
            <person name="Sun J."/>
            <person name="Viana C.J."/>
            <person name="Wallin E."/>
            <person name="Wang B."/>
            <person name="Wheeler C."/>
            <person name="Zhu H."/>
            <person name="Dean D.R."/>
            <person name="Dixon R."/>
            <person name="Wood D."/>
        </authorList>
    </citation>
    <scope>NUCLEOTIDE SEQUENCE [LARGE SCALE GENOMIC DNA]</scope>
    <source>
        <strain>DJ / ATCC BAA-1303</strain>
    </source>
</reference>
<feature type="chain" id="PRO_1000212279" description="Ureidoglycolate lyase">
    <location>
        <begin position="1"/>
        <end position="166"/>
    </location>
</feature>
<keyword id="KW-0456">Lyase</keyword>
<keyword id="KW-0659">Purine metabolism</keyword>
<evidence type="ECO:0000255" key="1">
    <source>
        <dbReference type="HAMAP-Rule" id="MF_00616"/>
    </source>
</evidence>
<protein>
    <recommendedName>
        <fullName evidence="1">Ureidoglycolate lyase</fullName>
        <ecNumber evidence="1">4.3.2.3</ecNumber>
    </recommendedName>
    <alternativeName>
        <fullName evidence="1">Ureidoglycolatase</fullName>
    </alternativeName>
</protein>
<gene>
    <name evidence="1" type="primary">allA</name>
    <name type="ordered locus">Avin_21100</name>
</gene>
<organism>
    <name type="scientific">Azotobacter vinelandii (strain DJ / ATCC BAA-1303)</name>
    <dbReference type="NCBI Taxonomy" id="322710"/>
    <lineage>
        <taxon>Bacteria</taxon>
        <taxon>Pseudomonadati</taxon>
        <taxon>Pseudomonadota</taxon>
        <taxon>Gammaproteobacteria</taxon>
        <taxon>Pseudomonadales</taxon>
        <taxon>Pseudomonadaceae</taxon>
        <taxon>Azotobacter</taxon>
    </lineage>
</organism>
<accession>C1DFA8</accession>
<proteinExistence type="inferred from homology"/>